<dbReference type="EMBL" id="AE017220">
    <property type="protein sequence ID" value="AAX67303.1"/>
    <property type="molecule type" value="Genomic_DNA"/>
</dbReference>
<dbReference type="RefSeq" id="WP_000586568.1">
    <property type="nucleotide sequence ID" value="NC_006905.1"/>
</dbReference>
<dbReference type="SMR" id="Q57J09"/>
<dbReference type="KEGG" id="sec:SCH_3397"/>
<dbReference type="HOGENOM" id="CLU_186759_1_0_6"/>
<dbReference type="Proteomes" id="UP000000538">
    <property type="component" value="Chromosome"/>
</dbReference>
<dbReference type="Gene3D" id="1.10.10.610">
    <property type="entry name" value="YehU-like"/>
    <property type="match status" value="1"/>
</dbReference>
<dbReference type="HAMAP" id="MF_00690">
    <property type="entry name" value="UPF0270"/>
    <property type="match status" value="1"/>
</dbReference>
<dbReference type="InterPro" id="IPR010648">
    <property type="entry name" value="UPF0270"/>
</dbReference>
<dbReference type="InterPro" id="IPR036685">
    <property type="entry name" value="YehU-like_sf"/>
</dbReference>
<dbReference type="NCBIfam" id="NF003438">
    <property type="entry name" value="PRK04966.1"/>
    <property type="match status" value="1"/>
</dbReference>
<dbReference type="Pfam" id="PF06794">
    <property type="entry name" value="UPF0270"/>
    <property type="match status" value="1"/>
</dbReference>
<dbReference type="PIRSF" id="PIRSF006169">
    <property type="entry name" value="UCP006169"/>
    <property type="match status" value="1"/>
</dbReference>
<dbReference type="SUPFAM" id="SSF118001">
    <property type="entry name" value="YehU-like"/>
    <property type="match status" value="1"/>
</dbReference>
<accession>Q57J09</accession>
<comment type="similarity">
    <text evidence="1">Belongs to the UPF0270 family.</text>
</comment>
<organism>
    <name type="scientific">Salmonella choleraesuis (strain SC-B67)</name>
    <dbReference type="NCBI Taxonomy" id="321314"/>
    <lineage>
        <taxon>Bacteria</taxon>
        <taxon>Pseudomonadati</taxon>
        <taxon>Pseudomonadota</taxon>
        <taxon>Gammaproteobacteria</taxon>
        <taxon>Enterobacterales</taxon>
        <taxon>Enterobacteriaceae</taxon>
        <taxon>Salmonella</taxon>
    </lineage>
</organism>
<evidence type="ECO:0000255" key="1">
    <source>
        <dbReference type="HAMAP-Rule" id="MF_00690"/>
    </source>
</evidence>
<proteinExistence type="inferred from homology"/>
<feature type="chain" id="PRO_1000045172" description="UPF0270 protein YheU">
    <location>
        <begin position="1"/>
        <end position="72"/>
    </location>
</feature>
<protein>
    <recommendedName>
        <fullName evidence="1">UPF0270 protein YheU</fullName>
    </recommendedName>
</protein>
<reference key="1">
    <citation type="journal article" date="2005" name="Nucleic Acids Res.">
        <title>The genome sequence of Salmonella enterica serovar Choleraesuis, a highly invasive and resistant zoonotic pathogen.</title>
        <authorList>
            <person name="Chiu C.-H."/>
            <person name="Tang P."/>
            <person name="Chu C."/>
            <person name="Hu S."/>
            <person name="Bao Q."/>
            <person name="Yu J."/>
            <person name="Chou Y.-Y."/>
            <person name="Wang H.-S."/>
            <person name="Lee Y.-S."/>
        </authorList>
    </citation>
    <scope>NUCLEOTIDE SEQUENCE [LARGE SCALE GENOMIC DNA]</scope>
    <source>
        <strain>SC-B67</strain>
    </source>
</reference>
<sequence>MIIPWQGLAPDTLDNLIESFVLREGTDYGEHERSLEQKVADVKRQLQSGEAVLVWSELHETVNIMPKKQFRE</sequence>
<gene>
    <name evidence="1" type="primary">yheU</name>
    <name type="ordered locus">SCH_3397</name>
</gene>
<name>YHEU_SALCH</name>